<accession>Q9C9W9</accession>
<accession>Q9M648</accession>
<protein>
    <recommendedName>
        <fullName>Adagio protein 3</fullName>
    </recommendedName>
    <alternativeName>
        <fullName>F-box only protein 2a</fullName>
        <shortName>FBX2a</shortName>
    </alternativeName>
    <alternativeName>
        <fullName>Flavin-binding kelch repeat F-box protein 1</fullName>
    </alternativeName>
</protein>
<sequence>MAREHAIGEATGKRKKRGRVEEAEEYCNDGIEEQVEDEKLPLEVGMFYYPMTPPSFIVSDALEPDFPLIYVNRVFEVFTGYRADEVLGRNCRFLQYRDPRAQRRHPLVDPVVVSEIRRCLEEGIEFQGELLNFRKDGTPLVNRLRLAPIRDDDGTITHVIGIQVFSETTIDLDRVSYPVFKHKQQLDQTSECLFPSGSPRFKEHHEDFCGILQLSDEVLAHNILSRLTPRDVASIGSACRRLRQLTKNESVRKMVCQNAWGKEITGTLEIMTKKLRWGRLARELTTLEAVCWRKFTVGGIVQPSRCNFSACAVGNRLVLFGGEGVNMQPLDDTFVLNLDAECPEWQRVRVTSSPPGRWGHTLSCLNGSWLVVFGGCGRQGLLNDVFVLDLDAKHPTWKEVAGGTPPLPRSWHSSCTIEGSKLVVSGGCTDAGVLLSDTFLLDLTTDKPTWKEIPTSWAPPSRLGHSLSVFGRTKILMFGGLANSGHLKLRSGEAYTIDLEDEEPRWRELECSAFPGVVVPPPRLDHVAVSMPCGRVIIFGGSIAGLHSPSQLFLIDPAEEKPSWRILNVPGKPPKLAWGHSTCVVGGTRVLVLGGHTGEEWILNELHELCLASRQDSDL</sequence>
<organism>
    <name type="scientific">Arabidopsis thaliana</name>
    <name type="common">Mouse-ear cress</name>
    <dbReference type="NCBI Taxonomy" id="3702"/>
    <lineage>
        <taxon>Eukaryota</taxon>
        <taxon>Viridiplantae</taxon>
        <taxon>Streptophyta</taxon>
        <taxon>Embryophyta</taxon>
        <taxon>Tracheophyta</taxon>
        <taxon>Spermatophyta</taxon>
        <taxon>Magnoliopsida</taxon>
        <taxon>eudicotyledons</taxon>
        <taxon>Gunneridae</taxon>
        <taxon>Pentapetalae</taxon>
        <taxon>rosids</taxon>
        <taxon>malvids</taxon>
        <taxon>Brassicales</taxon>
        <taxon>Brassicaceae</taxon>
        <taxon>Camelineae</taxon>
        <taxon>Arabidopsis</taxon>
    </lineage>
</organism>
<keyword id="KW-0090">Biological rhythms</keyword>
<keyword id="KW-0157">Chromophore</keyword>
<keyword id="KW-0963">Cytoplasm</keyword>
<keyword id="KW-0285">Flavoprotein</keyword>
<keyword id="KW-0287">Flowering</keyword>
<keyword id="KW-0288">FMN</keyword>
<keyword id="KW-0880">Kelch repeat</keyword>
<keyword id="KW-0539">Nucleus</keyword>
<keyword id="KW-0600">Photoreceptor protein</keyword>
<keyword id="KW-0675">Receptor</keyword>
<keyword id="KW-1185">Reference proteome</keyword>
<keyword id="KW-0677">Repeat</keyword>
<keyword id="KW-0716">Sensory transduction</keyword>
<keyword id="KW-0833">Ubl conjugation pathway</keyword>
<name>ADO3_ARATH</name>
<gene>
    <name type="primary">ADO3</name>
    <name type="synonym">FKF1</name>
    <name type="ordered locus">At1g68050</name>
    <name type="ORF">T23K23.10</name>
</gene>
<reference key="1">
    <citation type="journal article" date="2000" name="Cell">
        <title>FKF1, a clock-controlled gene that regulates the transition to flowering in Arabidopsis.</title>
        <authorList>
            <person name="Nelson D.C."/>
            <person name="Lasswell J.E."/>
            <person name="Rogg L.E."/>
            <person name="Cohen M.A."/>
            <person name="Bartel B."/>
        </authorList>
    </citation>
    <scope>NUCLEOTIDE SEQUENCE [MRNA]</scope>
    <scope>FUNCTION</scope>
    <scope>TISSUE SPECIFICITY</scope>
    <scope>INDUCTION</scope>
    <source>
        <strain>cv. Landsberg erecta</strain>
    </source>
</reference>
<reference key="2">
    <citation type="journal article" date="2001" name="Nature">
        <title>An Arabidopsis circadian clock component interacts with both CRY1 and phyB.</title>
        <authorList>
            <person name="Jarillo J.A."/>
            <person name="Capel J."/>
            <person name="Tang R.-H."/>
            <person name="Yang H.-Q."/>
            <person name="Alonso J.M."/>
            <person name="Ecker J.R."/>
            <person name="Cashmore A.R."/>
        </authorList>
    </citation>
    <scope>NUCLEOTIDE SEQUENCE [MRNA]</scope>
</reference>
<reference key="3">
    <citation type="journal article" date="2000" name="Nature">
        <title>Sequence and analysis of chromosome 1 of the plant Arabidopsis thaliana.</title>
        <authorList>
            <person name="Theologis A."/>
            <person name="Ecker J.R."/>
            <person name="Palm C.J."/>
            <person name="Federspiel N.A."/>
            <person name="Kaul S."/>
            <person name="White O."/>
            <person name="Alonso J."/>
            <person name="Altafi H."/>
            <person name="Araujo R."/>
            <person name="Bowman C.L."/>
            <person name="Brooks S.Y."/>
            <person name="Buehler E."/>
            <person name="Chan A."/>
            <person name="Chao Q."/>
            <person name="Chen H."/>
            <person name="Cheuk R.F."/>
            <person name="Chin C.W."/>
            <person name="Chung M.K."/>
            <person name="Conn L."/>
            <person name="Conway A.B."/>
            <person name="Conway A.R."/>
            <person name="Creasy T.H."/>
            <person name="Dewar K."/>
            <person name="Dunn P."/>
            <person name="Etgu P."/>
            <person name="Feldblyum T.V."/>
            <person name="Feng J.-D."/>
            <person name="Fong B."/>
            <person name="Fujii C.Y."/>
            <person name="Gill J.E."/>
            <person name="Goldsmith A.D."/>
            <person name="Haas B."/>
            <person name="Hansen N.F."/>
            <person name="Hughes B."/>
            <person name="Huizar L."/>
            <person name="Hunter J.L."/>
            <person name="Jenkins J."/>
            <person name="Johnson-Hopson C."/>
            <person name="Khan S."/>
            <person name="Khaykin E."/>
            <person name="Kim C.J."/>
            <person name="Koo H.L."/>
            <person name="Kremenetskaia I."/>
            <person name="Kurtz D.B."/>
            <person name="Kwan A."/>
            <person name="Lam B."/>
            <person name="Langin-Hooper S."/>
            <person name="Lee A."/>
            <person name="Lee J.M."/>
            <person name="Lenz C.A."/>
            <person name="Li J.H."/>
            <person name="Li Y.-P."/>
            <person name="Lin X."/>
            <person name="Liu S.X."/>
            <person name="Liu Z.A."/>
            <person name="Luros J.S."/>
            <person name="Maiti R."/>
            <person name="Marziali A."/>
            <person name="Militscher J."/>
            <person name="Miranda M."/>
            <person name="Nguyen M."/>
            <person name="Nierman W.C."/>
            <person name="Osborne B.I."/>
            <person name="Pai G."/>
            <person name="Peterson J."/>
            <person name="Pham P.K."/>
            <person name="Rizzo M."/>
            <person name="Rooney T."/>
            <person name="Rowley D."/>
            <person name="Sakano H."/>
            <person name="Salzberg S.L."/>
            <person name="Schwartz J.R."/>
            <person name="Shinn P."/>
            <person name="Southwick A.M."/>
            <person name="Sun H."/>
            <person name="Tallon L.J."/>
            <person name="Tambunga G."/>
            <person name="Toriumi M.J."/>
            <person name="Town C.D."/>
            <person name="Utterback T."/>
            <person name="Van Aken S."/>
            <person name="Vaysberg M."/>
            <person name="Vysotskaia V.S."/>
            <person name="Walker M."/>
            <person name="Wu D."/>
            <person name="Yu G."/>
            <person name="Fraser C.M."/>
            <person name="Venter J.C."/>
            <person name="Davis R.W."/>
        </authorList>
    </citation>
    <scope>NUCLEOTIDE SEQUENCE [LARGE SCALE GENOMIC DNA]</scope>
    <source>
        <strain>cv. Columbia</strain>
    </source>
</reference>
<reference key="4">
    <citation type="journal article" date="2017" name="Plant J.">
        <title>Araport11: a complete reannotation of the Arabidopsis thaliana reference genome.</title>
        <authorList>
            <person name="Cheng C.Y."/>
            <person name="Krishnakumar V."/>
            <person name="Chan A.P."/>
            <person name="Thibaud-Nissen F."/>
            <person name="Schobel S."/>
            <person name="Town C.D."/>
        </authorList>
    </citation>
    <scope>GENOME REANNOTATION</scope>
    <source>
        <strain>cv. Columbia</strain>
    </source>
</reference>
<reference key="5">
    <citation type="journal article" date="2003" name="Science">
        <title>Empirical analysis of transcriptional activity in the Arabidopsis genome.</title>
        <authorList>
            <person name="Yamada K."/>
            <person name="Lim J."/>
            <person name="Dale J.M."/>
            <person name="Chen H."/>
            <person name="Shinn P."/>
            <person name="Palm C.J."/>
            <person name="Southwick A.M."/>
            <person name="Wu H.C."/>
            <person name="Kim C.J."/>
            <person name="Nguyen M."/>
            <person name="Pham P.K."/>
            <person name="Cheuk R.F."/>
            <person name="Karlin-Newmann G."/>
            <person name="Liu S.X."/>
            <person name="Lam B."/>
            <person name="Sakano H."/>
            <person name="Wu T."/>
            <person name="Yu G."/>
            <person name="Miranda M."/>
            <person name="Quach H.L."/>
            <person name="Tripp M."/>
            <person name="Chang C.H."/>
            <person name="Lee J.M."/>
            <person name="Toriumi M.J."/>
            <person name="Chan M.M."/>
            <person name="Tang C.C."/>
            <person name="Onodera C.S."/>
            <person name="Deng J.M."/>
            <person name="Akiyama K."/>
            <person name="Ansari Y."/>
            <person name="Arakawa T."/>
            <person name="Banh J."/>
            <person name="Banno F."/>
            <person name="Bowser L."/>
            <person name="Brooks S.Y."/>
            <person name="Carninci P."/>
            <person name="Chao Q."/>
            <person name="Choy N."/>
            <person name="Enju A."/>
            <person name="Goldsmith A.D."/>
            <person name="Gurjal M."/>
            <person name="Hansen N.F."/>
            <person name="Hayashizaki Y."/>
            <person name="Johnson-Hopson C."/>
            <person name="Hsuan V.W."/>
            <person name="Iida K."/>
            <person name="Karnes M."/>
            <person name="Khan S."/>
            <person name="Koesema E."/>
            <person name="Ishida J."/>
            <person name="Jiang P.X."/>
            <person name="Jones T."/>
            <person name="Kawai J."/>
            <person name="Kamiya A."/>
            <person name="Meyers C."/>
            <person name="Nakajima M."/>
            <person name="Narusaka M."/>
            <person name="Seki M."/>
            <person name="Sakurai T."/>
            <person name="Satou M."/>
            <person name="Tamse R."/>
            <person name="Vaysberg M."/>
            <person name="Wallender E.K."/>
            <person name="Wong C."/>
            <person name="Yamamura Y."/>
            <person name="Yuan S."/>
            <person name="Shinozaki K."/>
            <person name="Davis R.W."/>
            <person name="Theologis A."/>
            <person name="Ecker J.R."/>
        </authorList>
    </citation>
    <scope>NUCLEOTIDE SEQUENCE [LARGE SCALE MRNA]</scope>
    <source>
        <strain>cv. Columbia</strain>
    </source>
</reference>
<reference key="6">
    <citation type="journal article" date="2000" name="Trends Plant Sci.">
        <title>F-box proteins in Arabidopsis.</title>
        <authorList>
            <person name="Xiao W."/>
            <person name="Jang J.-C."/>
        </authorList>
    </citation>
    <scope>GENE FAMILY</scope>
    <scope>NOMENCLATURE</scope>
</reference>
<reference key="7">
    <citation type="journal article" date="2003" name="Nature">
        <title>FKF1 is essential for photoperiodic-specific light signalling in Arabidopsis.</title>
        <authorList>
            <person name="Imaizumi T."/>
            <person name="Tran H.G."/>
            <person name="Swartz T.E."/>
            <person name="Briggs W.R."/>
            <person name="Kay S.A."/>
        </authorList>
    </citation>
    <scope>FUNCTION</scope>
    <scope>INDUCTION</scope>
    <scope>FMN-BINDING AT CYS-91</scope>
    <scope>MUTAGENESIS OF CYS-91</scope>
</reference>
<reference key="8">
    <citation type="journal article" date="2003" name="Proc. Natl. Acad. Sci. U.S.A.">
        <title>Functional conservation of light, oxygen, or voltage domains in light sensing.</title>
        <authorList>
            <person name="Cheng P."/>
            <person name="He Q."/>
            <person name="Yang Y."/>
            <person name="Wang L."/>
            <person name="Liu Y."/>
        </authorList>
    </citation>
    <scope>FUNCTION</scope>
</reference>
<reference key="9">
    <citation type="journal article" date="2004" name="J. Exp. Bot.">
        <title>Identification of ASK and clock-associated proteins as molecular partners of LKP2 (LOV kelch protein 2) in Arabidopsis.</title>
        <authorList>
            <person name="Yasuhara M."/>
            <person name="Mitsui S."/>
            <person name="Hirano H."/>
            <person name="Takanabe R."/>
            <person name="Tokioka Y."/>
            <person name="Ihara N."/>
            <person name="Komatsu A."/>
            <person name="Seki M."/>
            <person name="Shinozaki K."/>
            <person name="Kiyosue T."/>
        </authorList>
    </citation>
    <scope>INTERACTION WITH SKP1A; SKP1B; SKP1K; SKP1N AND ADO2</scope>
</reference>
<reference key="10">
    <citation type="journal article" date="2004" name="Plant Cell Physiol.">
        <title>Expression and interaction analysis of Arabidopsis Skp1-related genes.</title>
        <authorList>
            <person name="Takahashi N."/>
            <person name="Kuroda H."/>
            <person name="Kuromori T."/>
            <person name="Hirayama T."/>
            <person name="Seki M."/>
            <person name="Shinozaki K."/>
            <person name="Shimada H."/>
            <person name="Matsui M."/>
        </authorList>
    </citation>
    <scope>INTERACTION WITH SKP1A/ASK1; SKP1B/ASK2; ASK3; ASK11; ASK12 AND ASK13</scope>
</reference>
<reference key="11">
    <citation type="journal article" date="2005" name="Science">
        <title>FKF1 F-box protein mediates cyclic degradation of a repressor of CONSTANS in Arabidopsis.</title>
        <authorList>
            <person name="Imaizumi T."/>
            <person name="Schultz T.F."/>
            <person name="Harmon F.G."/>
            <person name="Ho L.A."/>
            <person name="Kay S.A."/>
        </authorList>
    </citation>
    <scope>FUNCTION</scope>
    <scope>INTERACTION WITH CDF1; CDF2 AND CDF3</scope>
    <scope>DISRUPTION PHENOTYPE</scope>
    <scope>TISSUE SPECIFICITY</scope>
</reference>
<reference key="12">
    <citation type="journal article" date="2007" name="Nature">
        <title>ZEITLUPE is a circadian photoreceptor stabilized by GIGANTEA in blue light.</title>
        <authorList>
            <person name="Kim W.Y."/>
            <person name="Fujiwara S."/>
            <person name="Suh S.S."/>
            <person name="Kim J."/>
            <person name="Kim Y."/>
            <person name="Han L."/>
            <person name="David K."/>
            <person name="Putterill J."/>
            <person name="Nam H.G."/>
            <person name="Somers D.E."/>
        </authorList>
    </citation>
    <scope>INTERACTION WITH GI</scope>
</reference>
<reference key="13">
    <citation type="journal article" date="2007" name="Science">
        <title>FKF1 and GIGANTEA complex formation is required for day-length measurement in Arabidopsis.</title>
        <authorList>
            <person name="Sawa M."/>
            <person name="Nusinow D.A."/>
            <person name="Kay S.A."/>
            <person name="Imaizumi T."/>
        </authorList>
    </citation>
    <scope>FUNCTION</scope>
    <scope>INTERACTION WITH GI</scope>
    <scope>MUTAGENESIS OF CYS-91; ARG-92 AND GLN-163</scope>
    <scope>INDUCTION</scope>
</reference>
<reference key="14">
    <citation type="journal article" date="2009" name="Dev. Cell">
        <title>Arabidopsis DOF transcription factors act redundantly to reduce CONSTANS expression and are essential for a photoperiodic flowering response.</title>
        <authorList>
            <person name="Fornara F."/>
            <person name="Panigrahi K.C."/>
            <person name="Gissot L."/>
            <person name="Sauerbrunn N."/>
            <person name="Ruehl M."/>
            <person name="Jarillo J.A."/>
            <person name="Coupland G."/>
        </authorList>
    </citation>
    <scope>FUNCTION</scope>
</reference>
<reference key="15">
    <citation type="journal article" date="2011" name="Plant J.">
        <title>LOV KELCH PROTEIN2 and ZEITLUPE repress Arabidopsis photoperiodic flowering under non-inductive conditions, dependent on FLAVIN-BINDING KELCH REPEAT F-BOX1.</title>
        <authorList>
            <person name="Takase T."/>
            <person name="Nishiyama Y."/>
            <person name="Tanihigashi H."/>
            <person name="Ogura Y."/>
            <person name="Miyazaki Y."/>
            <person name="Yamada Y."/>
            <person name="Kiyosue T."/>
        </authorList>
    </citation>
    <scope>FUNCTION</scope>
    <scope>INTERACTION WITH ADO1 AND ADO2</scope>
    <scope>SUBCELLULAR LOCATION</scope>
</reference>
<reference key="16">
    <citation type="journal article" date="2012" name="Science">
        <title>FKF1 conveys timing information for CONSTANS stabilization in photoperiodic flowering.</title>
        <authorList>
            <person name="Song Y.H."/>
            <person name="Smith R.W."/>
            <person name="To B.J."/>
            <person name="Millar A.J."/>
            <person name="Imaizumi T."/>
        </authorList>
    </citation>
    <scope>FUNCTION</scope>
    <scope>INTERACTION WITH CO</scope>
    <scope>SUBCELLULAR LOCATION</scope>
</reference>
<dbReference type="EMBL" id="AF216523">
    <property type="protein sequence ID" value="AAF32298.2"/>
    <property type="molecule type" value="mRNA"/>
</dbReference>
<dbReference type="EMBL" id="AF252296">
    <property type="protein sequence ID" value="AAK27435.1"/>
    <property type="molecule type" value="mRNA"/>
</dbReference>
<dbReference type="EMBL" id="AC012563">
    <property type="protein sequence ID" value="AAG51994.1"/>
    <property type="molecule type" value="Genomic_DNA"/>
</dbReference>
<dbReference type="EMBL" id="CP002684">
    <property type="protein sequence ID" value="AEE34741.1"/>
    <property type="molecule type" value="Genomic_DNA"/>
</dbReference>
<dbReference type="EMBL" id="AY064999">
    <property type="protein sequence ID" value="AAL57647.1"/>
    <property type="molecule type" value="mRNA"/>
</dbReference>
<dbReference type="EMBL" id="AY113029">
    <property type="protein sequence ID" value="AAM47337.1"/>
    <property type="molecule type" value="mRNA"/>
</dbReference>
<dbReference type="PIR" id="F96703">
    <property type="entry name" value="F96703"/>
</dbReference>
<dbReference type="RefSeq" id="NP_564919.1">
    <property type="nucleotide sequence ID" value="NM_105475.4"/>
</dbReference>
<dbReference type="SMR" id="Q9C9W9"/>
<dbReference type="BioGRID" id="28354">
    <property type="interactions" value="24"/>
</dbReference>
<dbReference type="DIP" id="DIP-31333N"/>
<dbReference type="FunCoup" id="Q9C9W9">
    <property type="interactions" value="24"/>
</dbReference>
<dbReference type="IntAct" id="Q9C9W9">
    <property type="interactions" value="16"/>
</dbReference>
<dbReference type="STRING" id="3702.Q9C9W9"/>
<dbReference type="GlyGen" id="Q9C9W9">
    <property type="glycosylation" value="2 sites"/>
</dbReference>
<dbReference type="iPTMnet" id="Q9C9W9"/>
<dbReference type="PaxDb" id="3702-AT1G68050.1"/>
<dbReference type="ProteomicsDB" id="244875"/>
<dbReference type="EnsemblPlants" id="AT1G68050.1">
    <property type="protein sequence ID" value="AT1G68050.1"/>
    <property type="gene ID" value="AT1G68050"/>
</dbReference>
<dbReference type="GeneID" id="843133"/>
<dbReference type="Gramene" id="AT1G68050.1">
    <property type="protein sequence ID" value="AT1G68050.1"/>
    <property type="gene ID" value="AT1G68050"/>
</dbReference>
<dbReference type="KEGG" id="ath:AT1G68050"/>
<dbReference type="Araport" id="AT1G68050"/>
<dbReference type="TAIR" id="AT1G68050">
    <property type="gene designation" value="FKF1"/>
</dbReference>
<dbReference type="eggNOG" id="ENOG502QWBU">
    <property type="taxonomic scope" value="Eukaryota"/>
</dbReference>
<dbReference type="HOGENOM" id="CLU_033494_1_0_1"/>
<dbReference type="InParanoid" id="Q9C9W9"/>
<dbReference type="OMA" id="AVCWRKF"/>
<dbReference type="OrthoDB" id="447251at2759"/>
<dbReference type="PhylomeDB" id="Q9C9W9"/>
<dbReference type="UniPathway" id="UPA00143"/>
<dbReference type="PRO" id="PR:Q9C9W9"/>
<dbReference type="Proteomes" id="UP000006548">
    <property type="component" value="Chromosome 1"/>
</dbReference>
<dbReference type="ExpressionAtlas" id="Q9C9W9">
    <property type="expression patterns" value="baseline and differential"/>
</dbReference>
<dbReference type="GO" id="GO:0005737">
    <property type="term" value="C:cytoplasm"/>
    <property type="evidence" value="ECO:0007669"/>
    <property type="project" value="UniProtKB-SubCell"/>
</dbReference>
<dbReference type="GO" id="GO:0005634">
    <property type="term" value="C:nucleus"/>
    <property type="evidence" value="ECO:0007669"/>
    <property type="project" value="UniProtKB-SubCell"/>
</dbReference>
<dbReference type="GO" id="GO:0009881">
    <property type="term" value="F:photoreceptor activity"/>
    <property type="evidence" value="ECO:0007669"/>
    <property type="project" value="UniProtKB-KW"/>
</dbReference>
<dbReference type="GO" id="GO:0007623">
    <property type="term" value="P:circadian rhythm"/>
    <property type="evidence" value="ECO:0000314"/>
    <property type="project" value="TAIR"/>
</dbReference>
<dbReference type="GO" id="GO:0009908">
    <property type="term" value="P:flower development"/>
    <property type="evidence" value="ECO:0007669"/>
    <property type="project" value="UniProtKB-KW"/>
</dbReference>
<dbReference type="GO" id="GO:2001007">
    <property type="term" value="P:negative regulation of cellulose biosynthetic process"/>
    <property type="evidence" value="ECO:0000315"/>
    <property type="project" value="TAIR"/>
</dbReference>
<dbReference type="GO" id="GO:0009911">
    <property type="term" value="P:positive regulation of flower development"/>
    <property type="evidence" value="ECO:0000315"/>
    <property type="project" value="TAIR"/>
</dbReference>
<dbReference type="GO" id="GO:0016567">
    <property type="term" value="P:protein ubiquitination"/>
    <property type="evidence" value="ECO:0007669"/>
    <property type="project" value="UniProtKB-UniPathway"/>
</dbReference>
<dbReference type="GO" id="GO:0006355">
    <property type="term" value="P:regulation of DNA-templated transcription"/>
    <property type="evidence" value="ECO:0000314"/>
    <property type="project" value="TAIR"/>
</dbReference>
<dbReference type="GO" id="GO:0010468">
    <property type="term" value="P:regulation of gene expression"/>
    <property type="evidence" value="ECO:0000315"/>
    <property type="project" value="TAIR"/>
</dbReference>
<dbReference type="GO" id="GO:0009637">
    <property type="term" value="P:response to blue light"/>
    <property type="evidence" value="ECO:0000314"/>
    <property type="project" value="TAIR"/>
</dbReference>
<dbReference type="CDD" id="cd22154">
    <property type="entry name" value="F-box_AtADO-like"/>
    <property type="match status" value="1"/>
</dbReference>
<dbReference type="CDD" id="cd00130">
    <property type="entry name" value="PAS"/>
    <property type="match status" value="1"/>
</dbReference>
<dbReference type="FunFam" id="3.30.450.20:FF:000041">
    <property type="entry name" value="Adagio protein 1"/>
    <property type="match status" value="1"/>
</dbReference>
<dbReference type="FunFam" id="2.120.10.80:FF:000005">
    <property type="entry name" value="Putative LOV domain-containing protein"/>
    <property type="match status" value="1"/>
</dbReference>
<dbReference type="FunFam" id="2.120.10.80:FF:000026">
    <property type="entry name" value="Putative LOV domain-containing protein"/>
    <property type="match status" value="1"/>
</dbReference>
<dbReference type="Gene3D" id="2.120.10.80">
    <property type="entry name" value="Kelch-type beta propeller"/>
    <property type="match status" value="2"/>
</dbReference>
<dbReference type="Gene3D" id="3.30.450.20">
    <property type="entry name" value="PAS domain"/>
    <property type="match status" value="1"/>
</dbReference>
<dbReference type="InterPro" id="IPR036047">
    <property type="entry name" value="F-box-like_dom_sf"/>
</dbReference>
<dbReference type="InterPro" id="IPR015915">
    <property type="entry name" value="Kelch-typ_b-propeller"/>
</dbReference>
<dbReference type="InterPro" id="IPR011498">
    <property type="entry name" value="Kelch_2"/>
</dbReference>
<dbReference type="InterPro" id="IPR001610">
    <property type="entry name" value="PAC"/>
</dbReference>
<dbReference type="InterPro" id="IPR000014">
    <property type="entry name" value="PAS"/>
</dbReference>
<dbReference type="InterPro" id="IPR035965">
    <property type="entry name" value="PAS-like_dom_sf"/>
</dbReference>
<dbReference type="NCBIfam" id="TIGR00229">
    <property type="entry name" value="sensory_box"/>
    <property type="match status" value="1"/>
</dbReference>
<dbReference type="PANTHER" id="PTHR46175:SF2">
    <property type="entry name" value="ADAGIO PROTEIN 3"/>
    <property type="match status" value="1"/>
</dbReference>
<dbReference type="PANTHER" id="PTHR46175">
    <property type="entry name" value="BACTERIOOPSIN TRANSCRIPTIONAL ACTIVATOR"/>
    <property type="match status" value="1"/>
</dbReference>
<dbReference type="Pfam" id="PF07646">
    <property type="entry name" value="Kelch_2"/>
    <property type="match status" value="1"/>
</dbReference>
<dbReference type="Pfam" id="PF24681">
    <property type="entry name" value="Kelch_KLHDC2_KLHL20_DRC7"/>
    <property type="match status" value="1"/>
</dbReference>
<dbReference type="Pfam" id="PF13426">
    <property type="entry name" value="PAS_9"/>
    <property type="match status" value="1"/>
</dbReference>
<dbReference type="SMART" id="SM00086">
    <property type="entry name" value="PAC"/>
    <property type="match status" value="1"/>
</dbReference>
<dbReference type="SUPFAM" id="SSF81383">
    <property type="entry name" value="F-box domain"/>
    <property type="match status" value="1"/>
</dbReference>
<dbReference type="SUPFAM" id="SSF117281">
    <property type="entry name" value="Kelch motif"/>
    <property type="match status" value="2"/>
</dbReference>
<dbReference type="SUPFAM" id="SSF55785">
    <property type="entry name" value="PYP-like sensor domain (PAS domain)"/>
    <property type="match status" value="1"/>
</dbReference>
<dbReference type="PROSITE" id="PS50112">
    <property type="entry name" value="PAS"/>
    <property type="match status" value="1"/>
</dbReference>
<comment type="function">
    <text evidence="2 3 4 7 9 10 11 12">Component of an E3 ubiquitin ligase complex that plays a central role in blue light-dependent circadian cycles. Acts as a blue light photoreceptor, due to the presence of FMN, that mediates light-regulated protein degradation of critical clock components by targeting them to the proteasome complex. The SCF(ADO3) E3 ubiquitin ligase complex is involved in the regulation of circadian clock-dependent processes including transition to flowering time, hypocotyl elongation, cotyledons and leaf movement rhythms. Forms a complex with 'GIGANTEA' (GI) to regulate 'CONSTANS' (CO) expression. Promotes CO expression during the light period of long days by decreasing the stability of CDF1 and CDF2 and by interacting directly with the CO protein and stabilizing it. ADO3 function is mainly GI dependent. Does not act as a regulator of CDF1 transcription. The interactions of ADO1/ZTL and ADO2 with ADO3 prevent its interaction with CDF1.</text>
</comment>
<comment type="pathway">
    <text>Protein modification; protein ubiquitination.</text>
</comment>
<comment type="subunit">
    <text evidence="5 6 7 8 9 11 12">Interacts with ADO1 (via Kelch repeats), ADO2 (via Kelch repeats), SKP1A/ASK1, SKP1B/ASK2, ASK3, SKP1K/ASK11, ASK12, ASK13 and SKP1N/ASK14. Interacts (via Kelch repeats) with CDF1, CDF2 and CDF3. Interacts (via N-terminus) with CO and GI (via N-terminus) in a blue-light-dependent manner.</text>
</comment>
<comment type="interaction">
    <interactant intactId="EBI-401228">
        <id>Q9C9W9</id>
    </interactant>
    <interactant intactId="EBI-1536051">
        <id>Q8W1E3</id>
        <label>CDF1</label>
    </interactant>
    <organismsDiffer>false</organismsDiffer>
    <experiments>2</experiments>
</comment>
<comment type="interaction">
    <interactant intactId="EBI-401228">
        <id>Q9C9W9</id>
    </interactant>
    <interactant intactId="EBI-1536103">
        <id>Q93ZL5</id>
        <label>CDF2</label>
    </interactant>
    <organismsDiffer>false</organismsDiffer>
    <experiments>2</experiments>
</comment>
<comment type="interaction">
    <interactant intactId="EBI-401228">
        <id>Q9C9W9</id>
    </interactant>
    <interactant intactId="EBI-1536119">
        <id>Q8LFV3</id>
        <label>CDF3</label>
    </interactant>
    <organismsDiffer>false</organismsDiffer>
    <experiments>2</experiments>
</comment>
<comment type="interaction">
    <interactant intactId="EBI-401228">
        <id>Q9C9W9</id>
    </interactant>
    <interactant intactId="EBI-446380">
        <id>Q9SQI2</id>
        <label>GI</label>
    </interactant>
    <organismsDiffer>false</organismsDiffer>
    <experiments>11</experiments>
</comment>
<comment type="interaction">
    <interactant intactId="EBI-401228">
        <id>Q9C9W9</id>
    </interactant>
    <interactant intactId="EBI-604076">
        <id>Q9FHW7</id>
        <label>SKP1B</label>
    </interactant>
    <organismsDiffer>false</organismsDiffer>
    <experiments>5</experiments>
</comment>
<comment type="interaction">
    <interactant intactId="EBI-401228">
        <id>Q9C9W9</id>
    </interactant>
    <interactant intactId="EBI-401174">
        <id>P43292</id>
        <label>SRK2G</label>
    </interactant>
    <organismsDiffer>false</organismsDiffer>
    <experiments>3</experiments>
</comment>
<comment type="subcellular location">
    <subcellularLocation>
        <location>Nucleus</location>
    </subcellularLocation>
    <subcellularLocation>
        <location>Cytoplasm</location>
    </subcellularLocation>
    <text>Moves from the nucleus into cytosolic speckles upon interaction with ADO1 and ADO2.</text>
</comment>
<comment type="tissue specificity">
    <text evidence="2 7">Highly expressed in stomata and leaves and to a lower extent in seeds, roots, rosettes, stems and siliques. Also present in sepals and anther filaments.</text>
</comment>
<comment type="induction">
    <text evidence="2 4 9">Circadian-regulation. Expression is higher during the late light phase than during the dark phase.</text>
</comment>
<comment type="PTM">
    <text>FMN binds covalently to cysteine after exposure to blue light and is reversed in the dark.</text>
</comment>
<comment type="disruption phenotype">
    <text evidence="7">Late flowering.</text>
</comment>
<comment type="miscellaneous">
    <text>'Adagio' means slowly in Italian.</text>
</comment>
<comment type="similarity">
    <text evidence="13">Belongs to the ADAGIO family.</text>
</comment>
<feature type="chain" id="PRO_0000119958" description="Adagio protein 3">
    <location>
        <begin position="1"/>
        <end position="619"/>
    </location>
</feature>
<feature type="domain" description="PAS" evidence="1">
    <location>
        <begin position="44"/>
        <end position="123"/>
    </location>
</feature>
<feature type="domain" description="PAC">
    <location>
        <begin position="127"/>
        <end position="168"/>
    </location>
</feature>
<feature type="domain" description="F-box">
    <location>
        <begin position="211"/>
        <end position="257"/>
    </location>
</feature>
<feature type="repeat" description="Kelch 1">
    <location>
        <begin position="304"/>
        <end position="354"/>
    </location>
</feature>
<feature type="repeat" description="Kelch 2">
    <location>
        <begin position="357"/>
        <end position="404"/>
    </location>
</feature>
<feature type="repeat" description="Kelch 3">
    <location>
        <begin position="409"/>
        <end position="457"/>
    </location>
</feature>
<feature type="repeat" description="Kelch 4">
    <location>
        <begin position="462"/>
        <end position="513"/>
    </location>
</feature>
<feature type="repeat" description="Kelch 5">
    <location>
        <begin position="523"/>
        <end position="571"/>
    </location>
</feature>
<feature type="modified residue" description="S-4a-FMN cysteine">
    <location>
        <position position="91"/>
    </location>
</feature>
<feature type="mutagenesis site" description="No FMN binding and decreased interaction with GI." evidence="4 9">
    <original>C</original>
    <variation>A</variation>
    <location>
        <position position="91"/>
    </location>
</feature>
<feature type="mutagenesis site" description="Decreased interaction with GI." evidence="9">
    <original>R</original>
    <variation>D</variation>
    <location>
        <position position="92"/>
    </location>
</feature>
<feature type="mutagenesis site" description="Decreased interaction with GI." evidence="9">
    <original>Q</original>
    <variation>L</variation>
    <location>
        <position position="163"/>
    </location>
</feature>
<feature type="sequence conflict" description="In Ref. 1; AAF32298 and 2; AAK27435." evidence="13" ref="1 2">
    <original>S</original>
    <variation>I</variation>
    <location>
        <position position="484"/>
    </location>
</feature>
<feature type="sequence conflict" description="In Ref. 1; AAF32298 and 2; AAK27435." evidence="13" ref="1 2">
    <original>S</original>
    <variation>N</variation>
    <location>
        <position position="581"/>
    </location>
</feature>
<proteinExistence type="evidence at protein level"/>
<evidence type="ECO:0000255" key="1">
    <source>
        <dbReference type="PROSITE-ProRule" id="PRU00140"/>
    </source>
</evidence>
<evidence type="ECO:0000269" key="2">
    <source>
    </source>
</evidence>
<evidence type="ECO:0000269" key="3">
    <source>
    </source>
</evidence>
<evidence type="ECO:0000269" key="4">
    <source>
    </source>
</evidence>
<evidence type="ECO:0000269" key="5">
    <source>
    </source>
</evidence>
<evidence type="ECO:0000269" key="6">
    <source>
    </source>
</evidence>
<evidence type="ECO:0000269" key="7">
    <source>
    </source>
</evidence>
<evidence type="ECO:0000269" key="8">
    <source>
    </source>
</evidence>
<evidence type="ECO:0000269" key="9">
    <source>
    </source>
</evidence>
<evidence type="ECO:0000269" key="10">
    <source>
    </source>
</evidence>
<evidence type="ECO:0000269" key="11">
    <source>
    </source>
</evidence>
<evidence type="ECO:0000269" key="12">
    <source>
    </source>
</evidence>
<evidence type="ECO:0000305" key="13"/>